<keyword id="KW-0256">Endoplasmic reticulum</keyword>
<keyword id="KW-0472">Membrane</keyword>
<keyword id="KW-0597">Phosphoprotein</keyword>
<keyword id="KW-1185">Reference proteome</keyword>
<keyword id="KW-0812">Transmembrane</keyword>
<keyword id="KW-1133">Transmembrane helix</keyword>
<keyword id="KW-0813">Transport</keyword>
<protein>
    <recommendedName>
        <fullName>Uncharacterized MFS-type transporter PB1E7.08c</fullName>
    </recommendedName>
</protein>
<proteinExistence type="evidence at protein level"/>
<evidence type="ECO:0000255" key="1"/>
<evidence type="ECO:0000256" key="2">
    <source>
        <dbReference type="SAM" id="MobiDB-lite"/>
    </source>
</evidence>
<evidence type="ECO:0000269" key="3">
    <source>
    </source>
</evidence>
<evidence type="ECO:0000269" key="4">
    <source>
    </source>
</evidence>
<evidence type="ECO:0000305" key="5"/>
<evidence type="ECO:0000312" key="6">
    <source>
        <dbReference type="EMBL" id="CAC36925.1"/>
    </source>
</evidence>
<organism>
    <name type="scientific">Schizosaccharomyces pombe (strain 972 / ATCC 24843)</name>
    <name type="common">Fission yeast</name>
    <dbReference type="NCBI Taxonomy" id="284812"/>
    <lineage>
        <taxon>Eukaryota</taxon>
        <taxon>Fungi</taxon>
        <taxon>Dikarya</taxon>
        <taxon>Ascomycota</taxon>
        <taxon>Taphrinomycotina</taxon>
        <taxon>Schizosaccharomycetes</taxon>
        <taxon>Schizosaccharomycetales</taxon>
        <taxon>Schizosaccharomycetaceae</taxon>
        <taxon>Schizosaccharomyces</taxon>
    </lineage>
</organism>
<dbReference type="EMBL" id="CU329670">
    <property type="protein sequence ID" value="CAC36925.1"/>
    <property type="molecule type" value="Genomic_DNA"/>
</dbReference>
<dbReference type="RefSeq" id="NP_594134.1">
    <property type="nucleotide sequence ID" value="NM_001019558.2"/>
</dbReference>
<dbReference type="SMR" id="Q9C101"/>
<dbReference type="BioGRID" id="280074">
    <property type="interactions" value="5"/>
</dbReference>
<dbReference type="FunCoup" id="Q9C101">
    <property type="interactions" value="136"/>
</dbReference>
<dbReference type="STRING" id="284812.Q9C101"/>
<dbReference type="TCDB" id="2.A.1.19.38">
    <property type="family name" value="the major facilitator superfamily (mfs)"/>
</dbReference>
<dbReference type="iPTMnet" id="Q9C101"/>
<dbReference type="PaxDb" id="4896-SPAPB1E7.08c.1"/>
<dbReference type="EnsemblFungi" id="SPAPB1E7.08c.1">
    <property type="protein sequence ID" value="SPAPB1E7.08c.1:pep"/>
    <property type="gene ID" value="SPAPB1E7.08c"/>
</dbReference>
<dbReference type="KEGG" id="spo:2543660"/>
<dbReference type="PomBase" id="SPAPB1E7.08c"/>
<dbReference type="VEuPathDB" id="FungiDB:SPAPB1E7.08c"/>
<dbReference type="eggNOG" id="KOG0253">
    <property type="taxonomic scope" value="Eukaryota"/>
</dbReference>
<dbReference type="HOGENOM" id="CLU_001265_52_2_1"/>
<dbReference type="InParanoid" id="Q9C101"/>
<dbReference type="OMA" id="LLWFIWM"/>
<dbReference type="PhylomeDB" id="Q9C101"/>
<dbReference type="PRO" id="PR:Q9C101"/>
<dbReference type="Proteomes" id="UP000002485">
    <property type="component" value="Chromosome I"/>
</dbReference>
<dbReference type="GO" id="GO:0005783">
    <property type="term" value="C:endoplasmic reticulum"/>
    <property type="evidence" value="ECO:0007005"/>
    <property type="project" value="PomBase"/>
</dbReference>
<dbReference type="GO" id="GO:0016020">
    <property type="term" value="C:membrane"/>
    <property type="evidence" value="ECO:0000318"/>
    <property type="project" value="GO_Central"/>
</dbReference>
<dbReference type="GO" id="GO:0022857">
    <property type="term" value="F:transmembrane transporter activity"/>
    <property type="evidence" value="ECO:0000255"/>
    <property type="project" value="PomBase"/>
</dbReference>
<dbReference type="CDD" id="cd17316">
    <property type="entry name" value="MFS_SV2_like"/>
    <property type="match status" value="1"/>
</dbReference>
<dbReference type="FunFam" id="1.20.1250.20:FF:000171">
    <property type="entry name" value="MFS general substrate transporter"/>
    <property type="match status" value="1"/>
</dbReference>
<dbReference type="Gene3D" id="1.20.1250.20">
    <property type="entry name" value="MFS general substrate transporter like domains"/>
    <property type="match status" value="1"/>
</dbReference>
<dbReference type="InterPro" id="IPR011701">
    <property type="entry name" value="MFS"/>
</dbReference>
<dbReference type="InterPro" id="IPR020846">
    <property type="entry name" value="MFS_dom"/>
</dbReference>
<dbReference type="InterPro" id="IPR036259">
    <property type="entry name" value="MFS_trans_sf"/>
</dbReference>
<dbReference type="PANTHER" id="PTHR23511">
    <property type="entry name" value="SYNAPTIC VESICLE GLYCOPROTEIN 2"/>
    <property type="match status" value="1"/>
</dbReference>
<dbReference type="PANTHER" id="PTHR23511:SF12">
    <property type="entry name" value="TRANSPORTER, PUTATIVE (AFU_ORTHOLOGUE AFUA_7G01740)-RELATED"/>
    <property type="match status" value="1"/>
</dbReference>
<dbReference type="Pfam" id="PF07690">
    <property type="entry name" value="MFS_1"/>
    <property type="match status" value="1"/>
</dbReference>
<dbReference type="SUPFAM" id="SSF103473">
    <property type="entry name" value="MFS general substrate transporter"/>
    <property type="match status" value="1"/>
</dbReference>
<dbReference type="PROSITE" id="PS50850">
    <property type="entry name" value="MFS"/>
    <property type="match status" value="1"/>
</dbReference>
<gene>
    <name type="ORF">SPAPB1E7.08c</name>
</gene>
<name>YKT8_SCHPO</name>
<comment type="subcellular location">
    <subcellularLocation>
        <location evidence="3">Endoplasmic reticulum</location>
    </subcellularLocation>
    <subcellularLocation>
        <location evidence="1">Membrane</location>
        <topology evidence="1">Multi-pass membrane protein</topology>
    </subcellularLocation>
</comment>
<comment type="similarity">
    <text evidence="1">Belongs to the major facilitator superfamily.</text>
</comment>
<reference evidence="6" key="1">
    <citation type="journal article" date="2002" name="Nature">
        <title>The genome sequence of Schizosaccharomyces pombe.</title>
        <authorList>
            <person name="Wood V."/>
            <person name="Gwilliam R."/>
            <person name="Rajandream M.A."/>
            <person name="Lyne M.H."/>
            <person name="Lyne R."/>
            <person name="Stewart A."/>
            <person name="Sgouros J.G."/>
            <person name="Peat N."/>
            <person name="Hayles J."/>
            <person name="Baker S.G."/>
            <person name="Basham D."/>
            <person name="Bowman S."/>
            <person name="Brooks K."/>
            <person name="Brown D."/>
            <person name="Brown S."/>
            <person name="Chillingworth T."/>
            <person name="Churcher C.M."/>
            <person name="Collins M."/>
            <person name="Connor R."/>
            <person name="Cronin A."/>
            <person name="Davis P."/>
            <person name="Feltwell T."/>
            <person name="Fraser A."/>
            <person name="Gentles S."/>
            <person name="Goble A."/>
            <person name="Hamlin N."/>
            <person name="Harris D.E."/>
            <person name="Hidalgo J."/>
            <person name="Hodgson G."/>
            <person name="Holroyd S."/>
            <person name="Hornsby T."/>
            <person name="Howarth S."/>
            <person name="Huckle E.J."/>
            <person name="Hunt S."/>
            <person name="Jagels K."/>
            <person name="James K.D."/>
            <person name="Jones L."/>
            <person name="Jones M."/>
            <person name="Leather S."/>
            <person name="McDonald S."/>
            <person name="McLean J."/>
            <person name="Mooney P."/>
            <person name="Moule S."/>
            <person name="Mungall K.L."/>
            <person name="Murphy L.D."/>
            <person name="Niblett D."/>
            <person name="Odell C."/>
            <person name="Oliver K."/>
            <person name="O'Neil S."/>
            <person name="Pearson D."/>
            <person name="Quail M.A."/>
            <person name="Rabbinowitsch E."/>
            <person name="Rutherford K.M."/>
            <person name="Rutter S."/>
            <person name="Saunders D."/>
            <person name="Seeger K."/>
            <person name="Sharp S."/>
            <person name="Skelton J."/>
            <person name="Simmonds M.N."/>
            <person name="Squares R."/>
            <person name="Squares S."/>
            <person name="Stevens K."/>
            <person name="Taylor K."/>
            <person name="Taylor R.G."/>
            <person name="Tivey A."/>
            <person name="Walsh S.V."/>
            <person name="Warren T."/>
            <person name="Whitehead S."/>
            <person name="Woodward J.R."/>
            <person name="Volckaert G."/>
            <person name="Aert R."/>
            <person name="Robben J."/>
            <person name="Grymonprez B."/>
            <person name="Weltjens I."/>
            <person name="Vanstreels E."/>
            <person name="Rieger M."/>
            <person name="Schaefer M."/>
            <person name="Mueller-Auer S."/>
            <person name="Gabel C."/>
            <person name="Fuchs M."/>
            <person name="Duesterhoeft A."/>
            <person name="Fritzc C."/>
            <person name="Holzer E."/>
            <person name="Moestl D."/>
            <person name="Hilbert H."/>
            <person name="Borzym K."/>
            <person name="Langer I."/>
            <person name="Beck A."/>
            <person name="Lehrach H."/>
            <person name="Reinhardt R."/>
            <person name="Pohl T.M."/>
            <person name="Eger P."/>
            <person name="Zimmermann W."/>
            <person name="Wedler H."/>
            <person name="Wambutt R."/>
            <person name="Purnelle B."/>
            <person name="Goffeau A."/>
            <person name="Cadieu E."/>
            <person name="Dreano S."/>
            <person name="Gloux S."/>
            <person name="Lelaure V."/>
            <person name="Mottier S."/>
            <person name="Galibert F."/>
            <person name="Aves S.J."/>
            <person name="Xiang Z."/>
            <person name="Hunt C."/>
            <person name="Moore K."/>
            <person name="Hurst S.M."/>
            <person name="Lucas M."/>
            <person name="Rochet M."/>
            <person name="Gaillardin C."/>
            <person name="Tallada V.A."/>
            <person name="Garzon A."/>
            <person name="Thode G."/>
            <person name="Daga R.R."/>
            <person name="Cruzado L."/>
            <person name="Jimenez J."/>
            <person name="Sanchez M."/>
            <person name="del Rey F."/>
            <person name="Benito J."/>
            <person name="Dominguez A."/>
            <person name="Revuelta J.L."/>
            <person name="Moreno S."/>
            <person name="Armstrong J."/>
            <person name="Forsburg S.L."/>
            <person name="Cerutti L."/>
            <person name="Lowe T."/>
            <person name="McCombie W.R."/>
            <person name="Paulsen I."/>
            <person name="Potashkin J."/>
            <person name="Shpakovski G.V."/>
            <person name="Ussery D."/>
            <person name="Barrell B.G."/>
            <person name="Nurse P."/>
        </authorList>
    </citation>
    <scope>NUCLEOTIDE SEQUENCE [LARGE SCALE GENOMIC DNA]</scope>
    <source>
        <strain>972 / ATCC 24843</strain>
    </source>
</reference>
<reference evidence="5" key="2">
    <citation type="journal article" date="2006" name="Nat. Biotechnol.">
        <title>ORFeome cloning and global analysis of protein localization in the fission yeast Schizosaccharomyces pombe.</title>
        <authorList>
            <person name="Matsuyama A."/>
            <person name="Arai R."/>
            <person name="Yashiroda Y."/>
            <person name="Shirai A."/>
            <person name="Kamata A."/>
            <person name="Sekido S."/>
            <person name="Kobayashi Y."/>
            <person name="Hashimoto A."/>
            <person name="Hamamoto M."/>
            <person name="Hiraoka Y."/>
            <person name="Horinouchi S."/>
            <person name="Yoshida M."/>
        </authorList>
    </citation>
    <scope>SUBCELLULAR LOCATION [LARGE SCALE ANALYSIS]</scope>
</reference>
<reference evidence="5" key="3">
    <citation type="journal article" date="2008" name="J. Proteome Res.">
        <title>Phosphoproteome analysis of fission yeast.</title>
        <authorList>
            <person name="Wilson-Grady J.T."/>
            <person name="Villen J."/>
            <person name="Gygi S.P."/>
        </authorList>
    </citation>
    <scope>PHOSPHORYLATION [LARGE SCALE ANALYSIS] AT SER-13 AND SER-334</scope>
    <scope>IDENTIFICATION BY MASS SPECTROMETRY</scope>
</reference>
<feature type="chain" id="PRO_0000372717" description="Uncharacterized MFS-type transporter PB1E7.08c">
    <location>
        <begin position="1"/>
        <end position="554"/>
    </location>
</feature>
<feature type="transmembrane region" description="Helical" evidence="1">
    <location>
        <begin position="82"/>
        <end position="102"/>
    </location>
</feature>
<feature type="transmembrane region" description="Helical" evidence="1">
    <location>
        <begin position="120"/>
        <end position="140"/>
    </location>
</feature>
<feature type="transmembrane region" description="Helical" evidence="1">
    <location>
        <begin position="149"/>
        <end position="169"/>
    </location>
</feature>
<feature type="transmembrane region" description="Helical" evidence="1">
    <location>
        <begin position="171"/>
        <end position="191"/>
    </location>
</feature>
<feature type="transmembrane region" description="Helical" evidence="1">
    <location>
        <begin position="210"/>
        <end position="230"/>
    </location>
</feature>
<feature type="transmembrane region" description="Helical" evidence="1">
    <location>
        <begin position="253"/>
        <end position="273"/>
    </location>
</feature>
<feature type="transmembrane region" description="Helical" evidence="1">
    <location>
        <begin position="364"/>
        <end position="384"/>
    </location>
</feature>
<feature type="transmembrane region" description="Helical" evidence="1">
    <location>
        <begin position="412"/>
        <end position="432"/>
    </location>
</feature>
<feature type="transmembrane region" description="Helical" evidence="1">
    <location>
        <begin position="437"/>
        <end position="457"/>
    </location>
</feature>
<feature type="transmembrane region" description="Helical" evidence="1">
    <location>
        <begin position="462"/>
        <end position="482"/>
    </location>
</feature>
<feature type="transmembrane region" description="Helical" evidence="1">
    <location>
        <begin position="497"/>
        <end position="517"/>
    </location>
</feature>
<feature type="transmembrane region" description="Helical" evidence="1">
    <location>
        <begin position="525"/>
        <end position="545"/>
    </location>
</feature>
<feature type="region of interest" description="Disordered" evidence="2">
    <location>
        <begin position="1"/>
        <end position="25"/>
    </location>
</feature>
<feature type="modified residue" description="Phosphoserine" evidence="4">
    <location>
        <position position="13"/>
    </location>
</feature>
<feature type="modified residue" description="Phosphoserine" evidence="4">
    <location>
        <position position="334"/>
    </location>
</feature>
<accession>Q9C101</accession>
<sequence length="554" mass="61233">MSSSIPPRLYDMSPTESKKQEDVSETELVYPVELADATIQPSKSDDDLFDSNDFSKTYLAKSRILSNAMNEIGFGRYQWYLFFVAGFGWMSDNIWPVCTSLILMRLDEVDGPHPPAEGRAPYLTLSQNLGLLVGAMVWSLSADTIGRRWAFNLTFLFTGVFAVIAGASPNFASICVFDALWSFGVGGNLPVDSAIFLEALPSSHQWLLTVMSFWWAIGQVIANLVSWGLISNFSCPDDESVCHRADNKGWRYFLFTMGGMTLLMFAARFLVSVYESPKFYLAKGDDYKAVETIHKIARINGKTCTLTVEELYAIDRQEQEESDLDDSKSSDAKSVTQGTTNLIVEKLRKYNFEHIRQCFGSRKLAISSILVILSWAVIGLAFPLYNAFLPYYLETRGNANEPLSVAKTYRNSLIVSAIGVPGSLIAGVLVEFRIGRKGTLCLSLILTGVFLFASTTAKTSNAYLGWNCTFSFFSDIMYGVLYAYTPEVFPSKVRGTAVGLAASANRILGIFSPVIAMRANLTTSAPIFVSGALFIFAGILVVFFPYEPRGKSSF</sequence>